<name>PGTB2_CANAX</name>
<sequence>MSNLPPDEKVILFDKSKHVQYIVEQESHRSFEYWLSEHLRMNGLYWGVTALITMNELSALAQQDVIDYIMLCWDDKTGAFGSFPKHDGHILSTLSALQVLKIYDQELTVLNDNNESSNGNKRERLIKFITGLQLPDGSFQGDKYGEVDTRFVYTAVSSLSLLNALTDSIADTASAFIMQCFNFDGGFGLIPGSESHAAQVFTCVGALAIMNKLDLLDVENKKVKLIDWLTERQVLPSGGFNGRPEKLPDVCYSWWVLSSLSILKRKNWVDLKILENFILTCQDLENGGFSDRPGNQTDVYHTCFAIAGLSLIDYKKYGFKEIDPVYCMPVEVTSKFVRRSA</sequence>
<protein>
    <recommendedName>
        <fullName>Geranylgeranyl transferase type-2 subunit beta</fullName>
        <ecNumber>2.5.1.60</ecNumber>
    </recommendedName>
    <alternativeName>
        <fullName>Geranylgeranyl transferase type II subunit beta</fullName>
        <shortName>GGTase-II-beta</shortName>
    </alternativeName>
    <alternativeName>
        <fullName>Type II protein geranyl-geranyltransferase subunit beta</fullName>
        <shortName>PGGT</shortName>
    </alternativeName>
    <alternativeName>
        <fullName>YPT1/SEC4 proteins geranylgeranyltransferase subunit beta</fullName>
    </alternativeName>
</protein>
<keyword id="KW-0479">Metal-binding</keyword>
<keyword id="KW-0637">Prenyltransferase</keyword>
<keyword id="KW-0677">Repeat</keyword>
<keyword id="KW-0808">Transferase</keyword>
<keyword id="KW-0862">Zinc</keyword>
<reference key="1">
    <citation type="submission" date="1998-12" db="EMBL/GenBank/DDBJ databases">
        <title>Molecular cloning of BET2 gene from Candida albicans.</title>
        <authorList>
            <person name="Ishii N."/>
            <person name="Aoki Y."/>
            <person name="Arisawa M."/>
        </authorList>
    </citation>
    <scope>NUCLEOTIDE SEQUENCE [GENOMIC DNA]</scope>
    <source>
        <strain>ATCC 10231 / CBS 6431 / CIP 48.72 / DSM 1386 / NBRC 1594</strain>
    </source>
</reference>
<evidence type="ECO:0000250" key="1"/>
<evidence type="ECO:0000305" key="2"/>
<accession>O93830</accession>
<organism>
    <name type="scientific">Candida albicans</name>
    <name type="common">Yeast</name>
    <dbReference type="NCBI Taxonomy" id="5476"/>
    <lineage>
        <taxon>Eukaryota</taxon>
        <taxon>Fungi</taxon>
        <taxon>Dikarya</taxon>
        <taxon>Ascomycota</taxon>
        <taxon>Saccharomycotina</taxon>
        <taxon>Pichiomycetes</taxon>
        <taxon>Debaryomycetaceae</taxon>
        <taxon>Candida/Lodderomyces clade</taxon>
        <taxon>Candida</taxon>
    </lineage>
</organism>
<comment type="function">
    <text evidence="1">Catalyzes the transfer of a geranyl-geranyl moiety from geranyl-geranyl pyrophosphate to proteins having the C-terminal -XCC or -XCXC, where both cysteines may become modified. Acts on YPT1 and SEC4 (By similarity).</text>
</comment>
<comment type="catalytic activity">
    <reaction>
        <text>geranylgeranyl diphosphate + L-cysteinyl-[protein] = S-geranylgeranyl-L-cysteinyl-[protein] + diphosphate</text>
        <dbReference type="Rhea" id="RHEA:21240"/>
        <dbReference type="Rhea" id="RHEA-COMP:10131"/>
        <dbReference type="Rhea" id="RHEA-COMP:11537"/>
        <dbReference type="ChEBI" id="CHEBI:29950"/>
        <dbReference type="ChEBI" id="CHEBI:33019"/>
        <dbReference type="ChEBI" id="CHEBI:57533"/>
        <dbReference type="ChEBI" id="CHEBI:86021"/>
        <dbReference type="EC" id="2.5.1.60"/>
    </reaction>
</comment>
<comment type="cofactor">
    <cofactor evidence="1">
        <name>Zn(2+)</name>
        <dbReference type="ChEBI" id="CHEBI:29105"/>
    </cofactor>
    <text evidence="1">Binds 1 zinc ion per subunit.</text>
</comment>
<comment type="subunit">
    <text evidence="1">Heterodimer of an alpha and a beta subunit.</text>
</comment>
<comment type="similarity">
    <text evidence="2">Belongs to the protein prenyltransferase subunit beta family.</text>
</comment>
<proteinExistence type="inferred from homology"/>
<dbReference type="EC" id="2.5.1.60"/>
<dbReference type="EMBL" id="AB021171">
    <property type="protein sequence ID" value="BAA35193.1"/>
    <property type="molecule type" value="Genomic_DNA"/>
</dbReference>
<dbReference type="SMR" id="O93830"/>
<dbReference type="VEuPathDB" id="FungiDB:CAWG_02253"/>
<dbReference type="VEuPathDB" id="FungiDB:CR_09890C_A"/>
<dbReference type="GO" id="GO:0005968">
    <property type="term" value="C:Rab-protein geranylgeranyltransferase complex"/>
    <property type="evidence" value="ECO:0000250"/>
    <property type="project" value="UniProtKB"/>
</dbReference>
<dbReference type="GO" id="GO:0004663">
    <property type="term" value="F:Rab geranylgeranyltransferase activity"/>
    <property type="evidence" value="ECO:0000250"/>
    <property type="project" value="UniProtKB"/>
</dbReference>
<dbReference type="GO" id="GO:0031267">
    <property type="term" value="F:small GTPase binding"/>
    <property type="evidence" value="ECO:0000250"/>
    <property type="project" value="UniProtKB"/>
</dbReference>
<dbReference type="GO" id="GO:0008270">
    <property type="term" value="F:zinc ion binding"/>
    <property type="evidence" value="ECO:0000250"/>
    <property type="project" value="UniProtKB"/>
</dbReference>
<dbReference type="GO" id="GO:0018344">
    <property type="term" value="P:protein geranylgeranylation"/>
    <property type="evidence" value="ECO:0000250"/>
    <property type="project" value="UniProtKB"/>
</dbReference>
<dbReference type="CDD" id="cd02894">
    <property type="entry name" value="GGTase-II"/>
    <property type="match status" value="1"/>
</dbReference>
<dbReference type="FunFam" id="1.50.10.20:FF:000028">
    <property type="entry name" value="Geranylgeranyl transferase type-2 subunit beta"/>
    <property type="match status" value="1"/>
</dbReference>
<dbReference type="Gene3D" id="1.50.10.20">
    <property type="match status" value="1"/>
</dbReference>
<dbReference type="InterPro" id="IPR045089">
    <property type="entry name" value="PGGT1B-like"/>
</dbReference>
<dbReference type="InterPro" id="IPR001330">
    <property type="entry name" value="Prenyltrans"/>
</dbReference>
<dbReference type="InterPro" id="IPR026873">
    <property type="entry name" value="Ptb1"/>
</dbReference>
<dbReference type="InterPro" id="IPR008930">
    <property type="entry name" value="Terpenoid_cyclase/PrenylTrfase"/>
</dbReference>
<dbReference type="PANTHER" id="PTHR11774">
    <property type="entry name" value="GERANYLGERANYL TRANSFERASE TYPE BETA SUBUNIT"/>
    <property type="match status" value="1"/>
</dbReference>
<dbReference type="PANTHER" id="PTHR11774:SF11">
    <property type="entry name" value="GERANYLGERANYL TRANSFERASE TYPE-2 SUBUNIT BETA"/>
    <property type="match status" value="1"/>
</dbReference>
<dbReference type="Pfam" id="PF00432">
    <property type="entry name" value="Prenyltrans"/>
    <property type="match status" value="1"/>
</dbReference>
<dbReference type="SUPFAM" id="SSF48239">
    <property type="entry name" value="Terpenoid cyclases/Protein prenyltransferases"/>
    <property type="match status" value="1"/>
</dbReference>
<feature type="chain" id="PRO_0000119776" description="Geranylgeranyl transferase type-2 subunit beta">
    <location>
        <begin position="1"/>
        <end position="341"/>
    </location>
</feature>
<feature type="repeat" description="PFTB 1">
    <location>
        <begin position="15"/>
        <end position="55"/>
    </location>
</feature>
<feature type="repeat" description="PFTB 2">
    <location>
        <begin position="62"/>
        <end position="104"/>
    </location>
</feature>
<feature type="repeat" description="PFTB 3">
    <location>
        <begin position="122"/>
        <end position="163"/>
    </location>
</feature>
<feature type="repeat" description="PFTB 4">
    <location>
        <begin position="170"/>
        <end position="211"/>
    </location>
</feature>
<feature type="repeat" description="PFTB 5">
    <location>
        <begin position="223"/>
        <end position="264"/>
    </location>
</feature>
<feature type="repeat" description="PFTB 6">
    <location>
        <begin position="271"/>
        <end position="313"/>
    </location>
</feature>
<feature type="binding site" evidence="1">
    <location>
        <begin position="196"/>
        <end position="198"/>
    </location>
    <ligand>
        <name>geranylgeranyl diphosphate</name>
        <dbReference type="ChEBI" id="CHEBI:57533"/>
    </ligand>
</feature>
<feature type="binding site" evidence="1">
    <location>
        <begin position="243"/>
        <end position="255"/>
    </location>
    <ligand>
        <name>geranylgeranyl diphosphate</name>
        <dbReference type="ChEBI" id="CHEBI:57533"/>
    </ligand>
</feature>
<feature type="binding site" evidence="1">
    <location>
        <position position="249"/>
    </location>
    <ligand>
        <name>Zn(2+)</name>
        <dbReference type="ChEBI" id="CHEBI:29105"/>
        <note>catalytic</note>
    </ligand>
</feature>
<feature type="binding site" evidence="1">
    <location>
        <position position="251"/>
    </location>
    <ligand>
        <name>Zn(2+)</name>
        <dbReference type="ChEBI" id="CHEBI:29105"/>
        <note>catalytic</note>
    </ligand>
</feature>
<feature type="binding site" evidence="1">
    <location>
        <position position="301"/>
    </location>
    <ligand>
        <name>Zn(2+)</name>
        <dbReference type="ChEBI" id="CHEBI:29105"/>
        <note>catalytic</note>
    </ligand>
</feature>
<gene>
    <name type="primary">BET2</name>
</gene>